<sequence>MSDYKFTLNLPETEFPMRGNLANREPEMLERWTKDGLYQQIRDSRIGRTPFILHDGPPYANGSIHIGHSVNKILKDIIVKSKTMSGFDAPYVPGWDCHGLPIELKVEQKVGKPGQKISAAEFREECRKYAAEQVDGQRADFIRLGVLGDWQKPYLTMDFATEANIVRSLSKVIENGHLHKGVKPVHWCTDCGSALAEAEVEYEDKTSPAIDVAFTATDSKALAAQFGVSDYSHPVAMVIWTTTPWTLPANRALSISPELDYSLVEFAKEGATHAVILADVLVEACMTRYGAESHSVLGKVKGVALELVRFKHPFLAFDVPAILGDHVTTDAGTGVVHTAPGHGQDDFVVGQKYGLEVANPVGDNGVYKPDTEFFAGQHVFKANDNVVALLKEKGALLHHVAYRHSYPHCWRHKTPIIFRATPQWFISMDNQNLRKQALSEIEQTQWIPDWGQSRIEKMVENRPDWCISRQRTWGVPITLFVHRETEELHPDSVSLMARVANRIEQEGIQAWWDLDAAELLGEEAEQYRKVTDTLDVWYDSGSTFASVVGARPEFHGHGVDLYLEGSDQHRGWFMSSLMISTAMTGKAPYKQVLTHGFTVDGKGRKMSKSIGNVIAPQQVTNKLGADILRLWVAATDYSGEMTVSDEILNRSADAYRRIRNTARFLLANLNGFDPAKDLVAVEDMVALDRWAVRRAAALQQEIIEAYEQYNFHIVTQKLMQFCSVELGSFYLDIIKDRQYTAKQEGHARRSCQSALFHIAEAMVRWIAPILSFTADEVWQLLPGQRDAYVFTQEWYQDLQSITLDTDLSDAYWENLLTVRNEVNKVIEQARRDKRIGGSLDAEVTLFADAALTEQLTHIGDELRFVLLTSEAKVLPLADATSDAVETELASLKLEVNATTAEKCERCWHHREEVGTIEAHPTLCHRCVTNIEGDGEVRLFA</sequence>
<gene>
    <name evidence="1" type="primary">ileS</name>
    <name type="ordered locus">Shewana3_3136</name>
</gene>
<proteinExistence type="inferred from homology"/>
<keyword id="KW-0030">Aminoacyl-tRNA synthetase</keyword>
<keyword id="KW-0067">ATP-binding</keyword>
<keyword id="KW-0963">Cytoplasm</keyword>
<keyword id="KW-0436">Ligase</keyword>
<keyword id="KW-0479">Metal-binding</keyword>
<keyword id="KW-0547">Nucleotide-binding</keyword>
<keyword id="KW-0648">Protein biosynthesis</keyword>
<keyword id="KW-0862">Zinc</keyword>
<protein>
    <recommendedName>
        <fullName evidence="1">Isoleucine--tRNA ligase</fullName>
        <ecNumber evidence="1">6.1.1.5</ecNumber>
    </recommendedName>
    <alternativeName>
        <fullName evidence="1">Isoleucyl-tRNA synthetase</fullName>
        <shortName evidence="1">IleRS</shortName>
    </alternativeName>
</protein>
<evidence type="ECO:0000255" key="1">
    <source>
        <dbReference type="HAMAP-Rule" id="MF_02002"/>
    </source>
</evidence>
<dbReference type="EC" id="6.1.1.5" evidence="1"/>
<dbReference type="EMBL" id="CP000469">
    <property type="protein sequence ID" value="ABK49360.1"/>
    <property type="molecule type" value="Genomic_DNA"/>
</dbReference>
<dbReference type="RefSeq" id="WP_011717964.1">
    <property type="nucleotide sequence ID" value="NC_008577.1"/>
</dbReference>
<dbReference type="SMR" id="A0KZZ1"/>
<dbReference type="STRING" id="94122.Shewana3_3136"/>
<dbReference type="KEGG" id="shn:Shewana3_3136"/>
<dbReference type="eggNOG" id="COG0060">
    <property type="taxonomic scope" value="Bacteria"/>
</dbReference>
<dbReference type="HOGENOM" id="CLU_001493_7_1_6"/>
<dbReference type="OrthoDB" id="9810365at2"/>
<dbReference type="Proteomes" id="UP000002589">
    <property type="component" value="Chromosome"/>
</dbReference>
<dbReference type="GO" id="GO:0005829">
    <property type="term" value="C:cytosol"/>
    <property type="evidence" value="ECO:0007669"/>
    <property type="project" value="TreeGrafter"/>
</dbReference>
<dbReference type="GO" id="GO:0002161">
    <property type="term" value="F:aminoacyl-tRNA deacylase activity"/>
    <property type="evidence" value="ECO:0007669"/>
    <property type="project" value="InterPro"/>
</dbReference>
<dbReference type="GO" id="GO:0005524">
    <property type="term" value="F:ATP binding"/>
    <property type="evidence" value="ECO:0007669"/>
    <property type="project" value="UniProtKB-UniRule"/>
</dbReference>
<dbReference type="GO" id="GO:0004822">
    <property type="term" value="F:isoleucine-tRNA ligase activity"/>
    <property type="evidence" value="ECO:0007669"/>
    <property type="project" value="UniProtKB-UniRule"/>
</dbReference>
<dbReference type="GO" id="GO:0000049">
    <property type="term" value="F:tRNA binding"/>
    <property type="evidence" value="ECO:0007669"/>
    <property type="project" value="InterPro"/>
</dbReference>
<dbReference type="GO" id="GO:0008270">
    <property type="term" value="F:zinc ion binding"/>
    <property type="evidence" value="ECO:0007669"/>
    <property type="project" value="UniProtKB-UniRule"/>
</dbReference>
<dbReference type="GO" id="GO:0006428">
    <property type="term" value="P:isoleucyl-tRNA aminoacylation"/>
    <property type="evidence" value="ECO:0007669"/>
    <property type="project" value="UniProtKB-UniRule"/>
</dbReference>
<dbReference type="CDD" id="cd07960">
    <property type="entry name" value="Anticodon_Ia_Ile_BEm"/>
    <property type="match status" value="1"/>
</dbReference>
<dbReference type="CDD" id="cd00818">
    <property type="entry name" value="IleRS_core"/>
    <property type="match status" value="1"/>
</dbReference>
<dbReference type="FunFam" id="1.10.730.20:FF:000001">
    <property type="entry name" value="Isoleucine--tRNA ligase"/>
    <property type="match status" value="1"/>
</dbReference>
<dbReference type="FunFam" id="3.40.50.620:FF:000042">
    <property type="entry name" value="Isoleucine--tRNA ligase"/>
    <property type="match status" value="1"/>
</dbReference>
<dbReference type="FunFam" id="3.40.50.620:FF:000048">
    <property type="entry name" value="Isoleucine--tRNA ligase"/>
    <property type="match status" value="1"/>
</dbReference>
<dbReference type="Gene3D" id="1.10.730.20">
    <property type="match status" value="1"/>
</dbReference>
<dbReference type="Gene3D" id="3.40.50.620">
    <property type="entry name" value="HUPs"/>
    <property type="match status" value="2"/>
</dbReference>
<dbReference type="HAMAP" id="MF_02002">
    <property type="entry name" value="Ile_tRNA_synth_type1"/>
    <property type="match status" value="1"/>
</dbReference>
<dbReference type="InterPro" id="IPR001412">
    <property type="entry name" value="aa-tRNA-synth_I_CS"/>
</dbReference>
<dbReference type="InterPro" id="IPR002300">
    <property type="entry name" value="aa-tRNA-synth_Ia"/>
</dbReference>
<dbReference type="InterPro" id="IPR033708">
    <property type="entry name" value="Anticodon_Ile_BEm"/>
</dbReference>
<dbReference type="InterPro" id="IPR002301">
    <property type="entry name" value="Ile-tRNA-ligase"/>
</dbReference>
<dbReference type="InterPro" id="IPR023585">
    <property type="entry name" value="Ile-tRNA-ligase_type1"/>
</dbReference>
<dbReference type="InterPro" id="IPR050081">
    <property type="entry name" value="Ile-tRNA_ligase"/>
</dbReference>
<dbReference type="InterPro" id="IPR013155">
    <property type="entry name" value="M/V/L/I-tRNA-synth_anticd-bd"/>
</dbReference>
<dbReference type="InterPro" id="IPR014729">
    <property type="entry name" value="Rossmann-like_a/b/a_fold"/>
</dbReference>
<dbReference type="InterPro" id="IPR009080">
    <property type="entry name" value="tRNAsynth_Ia_anticodon-bd"/>
</dbReference>
<dbReference type="InterPro" id="IPR009008">
    <property type="entry name" value="Val/Leu/Ile-tRNA-synth_edit"/>
</dbReference>
<dbReference type="InterPro" id="IPR010663">
    <property type="entry name" value="Znf_FPG/IleRS"/>
</dbReference>
<dbReference type="NCBIfam" id="TIGR00392">
    <property type="entry name" value="ileS"/>
    <property type="match status" value="1"/>
</dbReference>
<dbReference type="PANTHER" id="PTHR42765:SF1">
    <property type="entry name" value="ISOLEUCINE--TRNA LIGASE, MITOCHONDRIAL"/>
    <property type="match status" value="1"/>
</dbReference>
<dbReference type="PANTHER" id="PTHR42765">
    <property type="entry name" value="SOLEUCYL-TRNA SYNTHETASE"/>
    <property type="match status" value="1"/>
</dbReference>
<dbReference type="Pfam" id="PF08264">
    <property type="entry name" value="Anticodon_1"/>
    <property type="match status" value="1"/>
</dbReference>
<dbReference type="Pfam" id="PF00133">
    <property type="entry name" value="tRNA-synt_1"/>
    <property type="match status" value="1"/>
</dbReference>
<dbReference type="Pfam" id="PF06827">
    <property type="entry name" value="zf-FPG_IleRS"/>
    <property type="match status" value="1"/>
</dbReference>
<dbReference type="PRINTS" id="PR00984">
    <property type="entry name" value="TRNASYNTHILE"/>
</dbReference>
<dbReference type="SUPFAM" id="SSF47323">
    <property type="entry name" value="Anticodon-binding domain of a subclass of class I aminoacyl-tRNA synthetases"/>
    <property type="match status" value="1"/>
</dbReference>
<dbReference type="SUPFAM" id="SSF52374">
    <property type="entry name" value="Nucleotidylyl transferase"/>
    <property type="match status" value="1"/>
</dbReference>
<dbReference type="SUPFAM" id="SSF50677">
    <property type="entry name" value="ValRS/IleRS/LeuRS editing domain"/>
    <property type="match status" value="1"/>
</dbReference>
<dbReference type="PROSITE" id="PS00178">
    <property type="entry name" value="AA_TRNA_LIGASE_I"/>
    <property type="match status" value="1"/>
</dbReference>
<accession>A0KZZ1</accession>
<name>SYI_SHESA</name>
<reference key="1">
    <citation type="submission" date="2006-09" db="EMBL/GenBank/DDBJ databases">
        <title>Complete sequence of chromosome 1 of Shewanella sp. ANA-3.</title>
        <authorList>
            <person name="Copeland A."/>
            <person name="Lucas S."/>
            <person name="Lapidus A."/>
            <person name="Barry K."/>
            <person name="Detter J.C."/>
            <person name="Glavina del Rio T."/>
            <person name="Hammon N."/>
            <person name="Israni S."/>
            <person name="Dalin E."/>
            <person name="Tice H."/>
            <person name="Pitluck S."/>
            <person name="Chertkov O."/>
            <person name="Brettin T."/>
            <person name="Bruce D."/>
            <person name="Han C."/>
            <person name="Tapia R."/>
            <person name="Gilna P."/>
            <person name="Schmutz J."/>
            <person name="Larimer F."/>
            <person name="Land M."/>
            <person name="Hauser L."/>
            <person name="Kyrpides N."/>
            <person name="Kim E."/>
            <person name="Newman D."/>
            <person name="Salticov C."/>
            <person name="Konstantinidis K."/>
            <person name="Klappenback J."/>
            <person name="Tiedje J."/>
            <person name="Richardson P."/>
        </authorList>
    </citation>
    <scope>NUCLEOTIDE SEQUENCE [LARGE SCALE GENOMIC DNA]</scope>
    <source>
        <strain>ANA-3</strain>
    </source>
</reference>
<comment type="function">
    <text evidence="1">Catalyzes the attachment of isoleucine to tRNA(Ile). As IleRS can inadvertently accommodate and process structurally similar amino acids such as valine, to avoid such errors it has two additional distinct tRNA(Ile)-dependent editing activities. One activity is designated as 'pretransfer' editing and involves the hydrolysis of activated Val-AMP. The other activity is designated 'posttransfer' editing and involves deacylation of mischarged Val-tRNA(Ile).</text>
</comment>
<comment type="catalytic activity">
    <reaction evidence="1">
        <text>tRNA(Ile) + L-isoleucine + ATP = L-isoleucyl-tRNA(Ile) + AMP + diphosphate</text>
        <dbReference type="Rhea" id="RHEA:11060"/>
        <dbReference type="Rhea" id="RHEA-COMP:9666"/>
        <dbReference type="Rhea" id="RHEA-COMP:9695"/>
        <dbReference type="ChEBI" id="CHEBI:30616"/>
        <dbReference type="ChEBI" id="CHEBI:33019"/>
        <dbReference type="ChEBI" id="CHEBI:58045"/>
        <dbReference type="ChEBI" id="CHEBI:78442"/>
        <dbReference type="ChEBI" id="CHEBI:78528"/>
        <dbReference type="ChEBI" id="CHEBI:456215"/>
        <dbReference type="EC" id="6.1.1.5"/>
    </reaction>
</comment>
<comment type="cofactor">
    <cofactor evidence="1">
        <name>Zn(2+)</name>
        <dbReference type="ChEBI" id="CHEBI:29105"/>
    </cofactor>
    <text evidence="1">Binds 1 zinc ion per subunit.</text>
</comment>
<comment type="subunit">
    <text evidence="1">Monomer.</text>
</comment>
<comment type="subcellular location">
    <subcellularLocation>
        <location evidence="1">Cytoplasm</location>
    </subcellularLocation>
</comment>
<comment type="domain">
    <text evidence="1">IleRS has two distinct active sites: one for aminoacylation and one for editing. The misactivated valine is translocated from the active site to the editing site, which sterically excludes the correctly activated isoleucine. The single editing site contains two valyl binding pockets, one specific for each substrate (Val-AMP or Val-tRNA(Ile)).</text>
</comment>
<comment type="similarity">
    <text evidence="1">Belongs to the class-I aminoacyl-tRNA synthetase family. IleS type 1 subfamily.</text>
</comment>
<organism>
    <name type="scientific">Shewanella sp. (strain ANA-3)</name>
    <dbReference type="NCBI Taxonomy" id="94122"/>
    <lineage>
        <taxon>Bacteria</taxon>
        <taxon>Pseudomonadati</taxon>
        <taxon>Pseudomonadota</taxon>
        <taxon>Gammaproteobacteria</taxon>
        <taxon>Alteromonadales</taxon>
        <taxon>Shewanellaceae</taxon>
        <taxon>Shewanella</taxon>
    </lineage>
</organism>
<feature type="chain" id="PRO_1000022120" description="Isoleucine--tRNA ligase">
    <location>
        <begin position="1"/>
        <end position="940"/>
    </location>
</feature>
<feature type="short sequence motif" description="'HIGH' region">
    <location>
        <begin position="58"/>
        <end position="68"/>
    </location>
</feature>
<feature type="short sequence motif" description="'KMSKS' region">
    <location>
        <begin position="605"/>
        <end position="609"/>
    </location>
</feature>
<feature type="binding site" evidence="1">
    <location>
        <position position="564"/>
    </location>
    <ligand>
        <name>L-isoleucyl-5'-AMP</name>
        <dbReference type="ChEBI" id="CHEBI:178002"/>
    </ligand>
</feature>
<feature type="binding site" evidence="1">
    <location>
        <position position="608"/>
    </location>
    <ligand>
        <name>ATP</name>
        <dbReference type="ChEBI" id="CHEBI:30616"/>
    </ligand>
</feature>
<feature type="binding site" evidence="1">
    <location>
        <position position="903"/>
    </location>
    <ligand>
        <name>Zn(2+)</name>
        <dbReference type="ChEBI" id="CHEBI:29105"/>
    </ligand>
</feature>
<feature type="binding site" evidence="1">
    <location>
        <position position="906"/>
    </location>
    <ligand>
        <name>Zn(2+)</name>
        <dbReference type="ChEBI" id="CHEBI:29105"/>
    </ligand>
</feature>
<feature type="binding site" evidence="1">
    <location>
        <position position="923"/>
    </location>
    <ligand>
        <name>Zn(2+)</name>
        <dbReference type="ChEBI" id="CHEBI:29105"/>
    </ligand>
</feature>
<feature type="binding site" evidence="1">
    <location>
        <position position="926"/>
    </location>
    <ligand>
        <name>Zn(2+)</name>
        <dbReference type="ChEBI" id="CHEBI:29105"/>
    </ligand>
</feature>